<dbReference type="EC" id="3.4.11.23" evidence="1"/>
<dbReference type="EMBL" id="CP000783">
    <property type="protein sequence ID" value="ABU76006.1"/>
    <property type="molecule type" value="Genomic_DNA"/>
</dbReference>
<dbReference type="RefSeq" id="WP_012124040.1">
    <property type="nucleotide sequence ID" value="NC_009778.1"/>
</dbReference>
<dbReference type="SMR" id="A7MGW9"/>
<dbReference type="MEROPS" id="M17.004"/>
<dbReference type="KEGG" id="esa:ESA_00729"/>
<dbReference type="PATRIC" id="fig|290339.8.peg.645"/>
<dbReference type="HOGENOM" id="CLU_013734_7_1_6"/>
<dbReference type="Proteomes" id="UP000000260">
    <property type="component" value="Chromosome"/>
</dbReference>
<dbReference type="GO" id="GO:0005737">
    <property type="term" value="C:cytoplasm"/>
    <property type="evidence" value="ECO:0007669"/>
    <property type="project" value="UniProtKB-SubCell"/>
</dbReference>
<dbReference type="GO" id="GO:0030145">
    <property type="term" value="F:manganese ion binding"/>
    <property type="evidence" value="ECO:0007669"/>
    <property type="project" value="UniProtKB-UniRule"/>
</dbReference>
<dbReference type="GO" id="GO:0070006">
    <property type="term" value="F:metalloaminopeptidase activity"/>
    <property type="evidence" value="ECO:0007669"/>
    <property type="project" value="InterPro"/>
</dbReference>
<dbReference type="GO" id="GO:0006508">
    <property type="term" value="P:proteolysis"/>
    <property type="evidence" value="ECO:0007669"/>
    <property type="project" value="UniProtKB-UniRule"/>
</dbReference>
<dbReference type="CDD" id="cd00433">
    <property type="entry name" value="Peptidase_M17"/>
    <property type="match status" value="1"/>
</dbReference>
<dbReference type="FunFam" id="3.40.630.10:FF:000037">
    <property type="entry name" value="Peptidase B"/>
    <property type="match status" value="1"/>
</dbReference>
<dbReference type="Gene3D" id="3.40.630.10">
    <property type="entry name" value="Zn peptidases"/>
    <property type="match status" value="1"/>
</dbReference>
<dbReference type="HAMAP" id="MF_00504">
    <property type="entry name" value="Aminopeptidase_M17"/>
    <property type="match status" value="1"/>
</dbReference>
<dbReference type="InterPro" id="IPR011356">
    <property type="entry name" value="Leucine_aapep/pepB"/>
</dbReference>
<dbReference type="InterPro" id="IPR047620">
    <property type="entry name" value="M17_PepB-like_N"/>
</dbReference>
<dbReference type="InterPro" id="IPR008330">
    <property type="entry name" value="Pept_M17_PepB"/>
</dbReference>
<dbReference type="InterPro" id="IPR000819">
    <property type="entry name" value="Peptidase_M17_C"/>
</dbReference>
<dbReference type="NCBIfam" id="NF003450">
    <property type="entry name" value="PRK05015.1"/>
    <property type="match status" value="1"/>
</dbReference>
<dbReference type="PANTHER" id="PTHR11963">
    <property type="entry name" value="LEUCINE AMINOPEPTIDASE-RELATED"/>
    <property type="match status" value="1"/>
</dbReference>
<dbReference type="PANTHER" id="PTHR11963:SF20">
    <property type="entry name" value="PEPTIDASE B"/>
    <property type="match status" value="1"/>
</dbReference>
<dbReference type="Pfam" id="PF12404">
    <property type="entry name" value="DUF3663"/>
    <property type="match status" value="1"/>
</dbReference>
<dbReference type="Pfam" id="PF00883">
    <property type="entry name" value="Peptidase_M17"/>
    <property type="match status" value="1"/>
</dbReference>
<dbReference type="PIRSF" id="PIRSF036388">
    <property type="entry name" value="Ctsl_amnpptdse_B"/>
    <property type="match status" value="1"/>
</dbReference>
<dbReference type="PRINTS" id="PR00481">
    <property type="entry name" value="LAMNOPPTDASE"/>
</dbReference>
<dbReference type="SUPFAM" id="SSF53187">
    <property type="entry name" value="Zn-dependent exopeptidases"/>
    <property type="match status" value="1"/>
</dbReference>
<dbReference type="PROSITE" id="PS00631">
    <property type="entry name" value="CYTOSOL_AP"/>
    <property type="match status" value="1"/>
</dbReference>
<feature type="chain" id="PRO_1000014889" description="Peptidase B">
    <location>
        <begin position="1"/>
        <end position="428"/>
    </location>
</feature>
<feature type="active site" evidence="1">
    <location>
        <position position="207"/>
    </location>
</feature>
<feature type="active site" evidence="1">
    <location>
        <position position="281"/>
    </location>
</feature>
<feature type="binding site" evidence="1">
    <location>
        <position position="195"/>
    </location>
    <ligand>
        <name>Mn(2+)</name>
        <dbReference type="ChEBI" id="CHEBI:29035"/>
        <label>2</label>
    </ligand>
</feature>
<feature type="binding site" evidence="1">
    <location>
        <position position="200"/>
    </location>
    <ligand>
        <name>Mn(2+)</name>
        <dbReference type="ChEBI" id="CHEBI:29035"/>
        <label>1</label>
    </ligand>
</feature>
<feature type="binding site" evidence="1">
    <location>
        <position position="200"/>
    </location>
    <ligand>
        <name>Mn(2+)</name>
        <dbReference type="ChEBI" id="CHEBI:29035"/>
        <label>2</label>
    </ligand>
</feature>
<feature type="binding site" evidence="1">
    <location>
        <position position="218"/>
    </location>
    <ligand>
        <name>Mn(2+)</name>
        <dbReference type="ChEBI" id="CHEBI:29035"/>
        <label>2</label>
    </ligand>
</feature>
<feature type="binding site" evidence="1">
    <location>
        <position position="277"/>
    </location>
    <ligand>
        <name>Mn(2+)</name>
        <dbReference type="ChEBI" id="CHEBI:29035"/>
        <label>1</label>
    </ligand>
</feature>
<feature type="binding site" evidence="1">
    <location>
        <position position="279"/>
    </location>
    <ligand>
        <name>Mn(2+)</name>
        <dbReference type="ChEBI" id="CHEBI:29035"/>
        <label>1</label>
    </ligand>
</feature>
<feature type="binding site" evidence="1">
    <location>
        <position position="279"/>
    </location>
    <ligand>
        <name>Mn(2+)</name>
        <dbReference type="ChEBI" id="CHEBI:29035"/>
        <label>2</label>
    </ligand>
</feature>
<organism>
    <name type="scientific">Cronobacter sakazakii (strain ATCC BAA-894)</name>
    <name type="common">Enterobacter sakazakii</name>
    <dbReference type="NCBI Taxonomy" id="290339"/>
    <lineage>
        <taxon>Bacteria</taxon>
        <taxon>Pseudomonadati</taxon>
        <taxon>Pseudomonadota</taxon>
        <taxon>Gammaproteobacteria</taxon>
        <taxon>Enterobacterales</taxon>
        <taxon>Enterobacteriaceae</taxon>
        <taxon>Cronobacter</taxon>
    </lineage>
</organism>
<comment type="function">
    <text evidence="1">Probably plays an important role in intracellular peptide degradation.</text>
</comment>
<comment type="catalytic activity">
    <reaction evidence="1">
        <text>Release of an N-terminal amino acid, Xaa, from a peptide or arylamide. Xaa is preferably Glu or Asp but may be other amino acids, including Leu, Met, His, Cys and Gln.</text>
        <dbReference type="EC" id="3.4.11.23"/>
    </reaction>
</comment>
<comment type="cofactor">
    <cofactor evidence="1">
        <name>Mn(2+)</name>
        <dbReference type="ChEBI" id="CHEBI:29035"/>
    </cofactor>
    <text evidence="1">Binds 2 manganese ions per subunit.</text>
</comment>
<comment type="subunit">
    <text evidence="1">Homohexamer.</text>
</comment>
<comment type="subcellular location">
    <subcellularLocation>
        <location evidence="1">Cytoplasm</location>
    </subcellularLocation>
</comment>
<comment type="similarity">
    <text evidence="1">Belongs to the peptidase M17 family.</text>
</comment>
<evidence type="ECO:0000255" key="1">
    <source>
        <dbReference type="HAMAP-Rule" id="MF_00504"/>
    </source>
</evidence>
<gene>
    <name evidence="1" type="primary">pepB</name>
    <name type="ordered locus">ESA_00729</name>
</gene>
<proteinExistence type="inferred from homology"/>
<sequence length="428" mass="46342">MTEAMKITLSHEPADARWGEKALYSFTQDGIALHLTGKDDLGLIQRAGRKIDGQGLKHVELAGDGWDVEKSWAFWMGYRGPKGKRTVTWAPLDDAQQKELNNRLKVIDWVRDVINAPAEEMGPEHLAQRAVDLLADVGGERVSYRITKGEDLREQNYMGLHTVGRGSERPPVLLALDFNPTGDANAPVFACLVGKGITFDSGGYSIKQTAFMDSMKSDMGGAALVTGSLAFAITRGLNKRVKLILCCADNMISGNAFRLGDIIRYRNGKTVEVMNTDAEGRLVLADGLIDASAQKPALIIDAATLTGAAKTALGNDYHALFSFDDALANRLLQSAQAENEAFWRLPLAEFHRNQLPSNFAELNNTAGGAYPAGASTAAGFLSHFVENYQQGWLHIDCSATYRKAAVEQWAAGATGIGVRTLANLLTAE</sequence>
<accession>A7MGW9</accession>
<name>PEPB_CROS8</name>
<protein>
    <recommendedName>
        <fullName evidence="1">Peptidase B</fullName>
        <ecNumber evidence="1">3.4.11.23</ecNumber>
    </recommendedName>
    <alternativeName>
        <fullName evidence="1">Aminopeptidase B</fullName>
    </alternativeName>
</protein>
<reference key="1">
    <citation type="journal article" date="2010" name="PLoS ONE">
        <title>Genome sequence of Cronobacter sakazakii BAA-894 and comparative genomic hybridization analysis with other Cronobacter species.</title>
        <authorList>
            <person name="Kucerova E."/>
            <person name="Clifton S.W."/>
            <person name="Xia X.Q."/>
            <person name="Long F."/>
            <person name="Porwollik S."/>
            <person name="Fulton L."/>
            <person name="Fronick C."/>
            <person name="Minx P."/>
            <person name="Kyung K."/>
            <person name="Warren W."/>
            <person name="Fulton R."/>
            <person name="Feng D."/>
            <person name="Wollam A."/>
            <person name="Shah N."/>
            <person name="Bhonagiri V."/>
            <person name="Nash W.E."/>
            <person name="Hallsworth-Pepin K."/>
            <person name="Wilson R.K."/>
            <person name="McClelland M."/>
            <person name="Forsythe S.J."/>
        </authorList>
    </citation>
    <scope>NUCLEOTIDE SEQUENCE [LARGE SCALE GENOMIC DNA]</scope>
    <source>
        <strain>ATCC BAA-894</strain>
    </source>
</reference>
<keyword id="KW-0031">Aminopeptidase</keyword>
<keyword id="KW-0963">Cytoplasm</keyword>
<keyword id="KW-0378">Hydrolase</keyword>
<keyword id="KW-0464">Manganese</keyword>
<keyword id="KW-0479">Metal-binding</keyword>
<keyword id="KW-0645">Protease</keyword>
<keyword id="KW-1185">Reference proteome</keyword>